<accession>Q46DV9</accession>
<feature type="chain" id="PRO_0000264801" description="RNA 3'-terminal phosphate cyclase">
    <location>
        <begin position="1"/>
        <end position="331"/>
    </location>
</feature>
<feature type="active site" description="Tele-AMP-histidine intermediate" evidence="1">
    <location>
        <position position="301"/>
    </location>
</feature>
<feature type="binding site" evidence="1">
    <location>
        <position position="100"/>
    </location>
    <ligand>
        <name>ATP</name>
        <dbReference type="ChEBI" id="CHEBI:30616"/>
    </ligand>
</feature>
<feature type="binding site" evidence="1">
    <location>
        <begin position="276"/>
        <end position="280"/>
    </location>
    <ligand>
        <name>ATP</name>
        <dbReference type="ChEBI" id="CHEBI:30616"/>
    </ligand>
</feature>
<gene>
    <name evidence="1" type="primary">rtcA</name>
    <name type="ordered locus">Mbar_A0961</name>
</gene>
<evidence type="ECO:0000255" key="1">
    <source>
        <dbReference type="HAMAP-Rule" id="MF_00200"/>
    </source>
</evidence>
<reference key="1">
    <citation type="journal article" date="2006" name="J. Bacteriol.">
        <title>The Methanosarcina barkeri genome: comparative analysis with Methanosarcina acetivorans and Methanosarcina mazei reveals extensive rearrangement within methanosarcinal genomes.</title>
        <authorList>
            <person name="Maeder D.L."/>
            <person name="Anderson I."/>
            <person name="Brettin T.S."/>
            <person name="Bruce D.C."/>
            <person name="Gilna P."/>
            <person name="Han C.S."/>
            <person name="Lapidus A."/>
            <person name="Metcalf W.W."/>
            <person name="Saunders E."/>
            <person name="Tapia R."/>
            <person name="Sowers K.R."/>
        </authorList>
    </citation>
    <scope>NUCLEOTIDE SEQUENCE [LARGE SCALE GENOMIC DNA]</scope>
    <source>
        <strain>Fusaro / DSM 804</strain>
    </source>
</reference>
<protein>
    <recommendedName>
        <fullName evidence="1">RNA 3'-terminal phosphate cyclase</fullName>
        <shortName evidence="1">RNA cyclase</shortName>
        <shortName evidence="1">RNA-3'-phosphate cyclase</shortName>
        <ecNumber evidence="1">6.5.1.4</ecNumber>
    </recommendedName>
</protein>
<proteinExistence type="inferred from homology"/>
<keyword id="KW-0067">ATP-binding</keyword>
<keyword id="KW-0963">Cytoplasm</keyword>
<keyword id="KW-0436">Ligase</keyword>
<keyword id="KW-0547">Nucleotide-binding</keyword>
<comment type="function">
    <text evidence="1">Catalyzes the conversion of 3'-phosphate to a 2',3'-cyclic phosphodiester at the end of RNA. The mechanism of action of the enzyme occurs in 3 steps: (A) adenylation of the enzyme by ATP; (B) transfer of adenylate to an RNA-N3'P to produce RNA-N3'PP5'A; (C) and attack of the adjacent 2'-hydroxyl on the 3'-phosphorus in the diester linkage to produce the cyclic end product. The biological role of this enzyme is unknown but it is likely to function in some aspects of cellular RNA processing.</text>
</comment>
<comment type="catalytic activity">
    <reaction evidence="1">
        <text>a 3'-end 3'-phospho-ribonucleotide-RNA + ATP = a 3'-end 2',3'-cyclophospho-ribonucleotide-RNA + AMP + diphosphate</text>
        <dbReference type="Rhea" id="RHEA:23976"/>
        <dbReference type="Rhea" id="RHEA-COMP:10463"/>
        <dbReference type="Rhea" id="RHEA-COMP:10464"/>
        <dbReference type="ChEBI" id="CHEBI:30616"/>
        <dbReference type="ChEBI" id="CHEBI:33019"/>
        <dbReference type="ChEBI" id="CHEBI:83062"/>
        <dbReference type="ChEBI" id="CHEBI:83064"/>
        <dbReference type="ChEBI" id="CHEBI:456215"/>
        <dbReference type="EC" id="6.5.1.4"/>
    </reaction>
</comment>
<comment type="subcellular location">
    <subcellularLocation>
        <location evidence="1">Cytoplasm</location>
    </subcellularLocation>
</comment>
<comment type="similarity">
    <text evidence="1">Belongs to the RNA 3'-terminal cyclase family. Type 1 subfamily.</text>
</comment>
<organism>
    <name type="scientific">Methanosarcina barkeri (strain Fusaro / DSM 804)</name>
    <dbReference type="NCBI Taxonomy" id="269797"/>
    <lineage>
        <taxon>Archaea</taxon>
        <taxon>Methanobacteriati</taxon>
        <taxon>Methanobacteriota</taxon>
        <taxon>Stenosarchaea group</taxon>
        <taxon>Methanomicrobia</taxon>
        <taxon>Methanosarcinales</taxon>
        <taxon>Methanosarcinaceae</taxon>
        <taxon>Methanosarcina</taxon>
    </lineage>
</organism>
<dbReference type="EC" id="6.5.1.4" evidence="1"/>
<dbReference type="EMBL" id="CP000099">
    <property type="protein sequence ID" value="AAZ69933.1"/>
    <property type="molecule type" value="Genomic_DNA"/>
</dbReference>
<dbReference type="SMR" id="Q46DV9"/>
<dbReference type="STRING" id="269797.Mbar_A0961"/>
<dbReference type="PaxDb" id="269797-Mbar_A0961"/>
<dbReference type="KEGG" id="mba:Mbar_A0961"/>
<dbReference type="eggNOG" id="arCOG04125">
    <property type="taxonomic scope" value="Archaea"/>
</dbReference>
<dbReference type="HOGENOM" id="CLU_027882_0_0_2"/>
<dbReference type="OrthoDB" id="7994at2157"/>
<dbReference type="GO" id="GO:0005737">
    <property type="term" value="C:cytoplasm"/>
    <property type="evidence" value="ECO:0007669"/>
    <property type="project" value="UniProtKB-SubCell"/>
</dbReference>
<dbReference type="GO" id="GO:0005524">
    <property type="term" value="F:ATP binding"/>
    <property type="evidence" value="ECO:0007669"/>
    <property type="project" value="UniProtKB-KW"/>
</dbReference>
<dbReference type="GO" id="GO:0003963">
    <property type="term" value="F:RNA-3'-phosphate cyclase activity"/>
    <property type="evidence" value="ECO:0007669"/>
    <property type="project" value="UniProtKB-UniRule"/>
</dbReference>
<dbReference type="GO" id="GO:0006396">
    <property type="term" value="P:RNA processing"/>
    <property type="evidence" value="ECO:0007669"/>
    <property type="project" value="InterPro"/>
</dbReference>
<dbReference type="CDD" id="cd00874">
    <property type="entry name" value="RNA_Cyclase_Class_II"/>
    <property type="match status" value="1"/>
</dbReference>
<dbReference type="Gene3D" id="3.65.10.20">
    <property type="entry name" value="RNA 3'-terminal phosphate cyclase domain"/>
    <property type="match status" value="1"/>
</dbReference>
<dbReference type="Gene3D" id="3.30.360.20">
    <property type="entry name" value="RNA 3'-terminal phosphate cyclase, insert domain"/>
    <property type="match status" value="1"/>
</dbReference>
<dbReference type="HAMAP" id="MF_00200">
    <property type="entry name" value="RTC"/>
    <property type="match status" value="1"/>
</dbReference>
<dbReference type="InterPro" id="IPR013791">
    <property type="entry name" value="RNA3'-term_phos_cycl_insert"/>
</dbReference>
<dbReference type="InterPro" id="IPR023797">
    <property type="entry name" value="RNA3'_phos_cyclase_dom"/>
</dbReference>
<dbReference type="InterPro" id="IPR037136">
    <property type="entry name" value="RNA3'_phos_cyclase_dom_sf"/>
</dbReference>
<dbReference type="InterPro" id="IPR000228">
    <property type="entry name" value="RNA3'_term_phos_cyc"/>
</dbReference>
<dbReference type="InterPro" id="IPR017770">
    <property type="entry name" value="RNA3'_term_phos_cyc_type_1"/>
</dbReference>
<dbReference type="InterPro" id="IPR020719">
    <property type="entry name" value="RNA3'_term_phos_cycl-like_CS"/>
</dbReference>
<dbReference type="InterPro" id="IPR013792">
    <property type="entry name" value="RNA3'P_cycl/enolpyr_Trfase_a/b"/>
</dbReference>
<dbReference type="InterPro" id="IPR036553">
    <property type="entry name" value="RPTC_insert"/>
</dbReference>
<dbReference type="NCBIfam" id="TIGR03399">
    <property type="entry name" value="RNA_3prim_cycl"/>
    <property type="match status" value="1"/>
</dbReference>
<dbReference type="PANTHER" id="PTHR11096">
    <property type="entry name" value="RNA 3' TERMINAL PHOSPHATE CYCLASE"/>
    <property type="match status" value="1"/>
</dbReference>
<dbReference type="PANTHER" id="PTHR11096:SF0">
    <property type="entry name" value="RNA 3'-TERMINAL PHOSPHATE CYCLASE"/>
    <property type="match status" value="1"/>
</dbReference>
<dbReference type="Pfam" id="PF01137">
    <property type="entry name" value="RTC"/>
    <property type="match status" value="1"/>
</dbReference>
<dbReference type="Pfam" id="PF05189">
    <property type="entry name" value="RTC_insert"/>
    <property type="match status" value="1"/>
</dbReference>
<dbReference type="PIRSF" id="PIRSF005378">
    <property type="entry name" value="RNA3'_term_phos_cycl_euk"/>
    <property type="match status" value="1"/>
</dbReference>
<dbReference type="SUPFAM" id="SSF55205">
    <property type="entry name" value="EPT/RTPC-like"/>
    <property type="match status" value="2"/>
</dbReference>
<dbReference type="SUPFAM" id="SSF52913">
    <property type="entry name" value="RNA 3'-terminal phosphate cyclase, RPTC, insert domain"/>
    <property type="match status" value="1"/>
</dbReference>
<dbReference type="PROSITE" id="PS01287">
    <property type="entry name" value="RTC"/>
    <property type="match status" value="1"/>
</dbReference>
<name>RTCA_METBF</name>
<sequence>MLEIDGSYGEGGGQLVRTAVALSAVTGQGIRITNIRKNRPSPGLKQQHLKALETAARICRAQISGLFPGSTEISFVPVEIEGGKYDIDIGTAGSITLLLQCIMPALPFAKEKVELTIKGGTDVAWSPTIDYLQHVTFRALEQLGYSGSITLKEHGYYPKGGGKVSAYFKPCRLREFHFLKEKEDIKGSSHASNLPAHVPLRQAEAASKRLMEAGYPSLIETQSFEAFSIGSGITLWIGYIGGSALGERGLPAEKVGKNAADEIIPELRSGASVDTHLADQLIPYMALAGNSSYTVRELSLHTTTNIWVTEQFLDVKFRIEKKEGLFEVSVS</sequence>